<feature type="chain" id="PRO_0000405167" description="Genome polyprotein">
    <location>
        <begin position="1"/>
        <end position="3414"/>
    </location>
</feature>
<feature type="chain" id="PRO_0000037793" description="Capsid protein C" evidence="1">
    <location>
        <begin position="1"/>
        <end position="96"/>
    </location>
</feature>
<feature type="propeptide" id="PRO_0000405168" description="ER anchor for the capsid protein C, removed in mature form by serine protease NS3" evidence="1">
    <location>
        <begin position="97"/>
        <end position="117"/>
    </location>
</feature>
<feature type="chain" id="PRO_0000405169" description="Protein prM" evidence="2">
    <location>
        <begin position="118"/>
        <end position="280"/>
    </location>
</feature>
<feature type="chain" id="PRO_0000037794" description="Peptide pr" evidence="2">
    <location>
        <begin position="118"/>
        <end position="205"/>
    </location>
</feature>
<feature type="chain" id="PRO_0000037795" description="Small envelope protein M" evidence="2">
    <location>
        <begin position="206"/>
        <end position="280"/>
    </location>
</feature>
<feature type="chain" id="PRO_0000037796" description="Envelope protein E" evidence="2">
    <location>
        <begin position="281"/>
        <end position="776"/>
    </location>
</feature>
<feature type="chain" id="PRO_0000037797" description="Non-structural protein 1" evidence="1">
    <location>
        <begin position="777"/>
        <end position="1128"/>
    </location>
</feature>
<feature type="chain" id="PRO_0000037798" description="Non-structural protein 2A" evidence="2">
    <location>
        <begin position="1129"/>
        <end position="1358"/>
    </location>
</feature>
<feature type="chain" id="PRO_0000037799" description="Serine protease subunit NS2B" evidence="1">
    <location>
        <begin position="1359"/>
        <end position="1489"/>
    </location>
</feature>
<feature type="chain" id="PRO_0000037800" description="Serine protease NS3" evidence="1">
    <location>
        <begin position="1490"/>
        <end position="2110"/>
    </location>
</feature>
<feature type="chain" id="PRO_0000037801" description="Non-structural protein 4A" evidence="1">
    <location>
        <begin position="2111"/>
        <end position="2236"/>
    </location>
</feature>
<feature type="peptide" id="PRO_0000405170" description="Peptide 2k" evidence="1">
    <location>
        <begin position="2237"/>
        <end position="2259"/>
    </location>
</feature>
<feature type="chain" id="PRO_0000037802" description="Non-structural protein 4B" evidence="1">
    <location>
        <begin position="2260"/>
        <end position="2511"/>
    </location>
</feature>
<feature type="chain" id="PRO_0000037803" description="RNA-directed RNA polymerase NS5" evidence="1">
    <location>
        <begin position="2512"/>
        <end position="3414"/>
    </location>
</feature>
<feature type="topological domain" description="Cytoplasmic" evidence="9">
    <location>
        <begin position="1"/>
        <end position="98"/>
    </location>
</feature>
<feature type="transmembrane region" description="Helical" evidence="9">
    <location>
        <begin position="99"/>
        <end position="119"/>
    </location>
</feature>
<feature type="topological domain" description="Extracellular" evidence="9">
    <location>
        <begin position="120"/>
        <end position="242"/>
    </location>
</feature>
<feature type="transmembrane region" description="Helical" evidence="9">
    <location>
        <begin position="243"/>
        <end position="260"/>
    </location>
</feature>
<feature type="topological domain" description="Cytoplasmic" evidence="9">
    <location>
        <position position="261"/>
    </location>
</feature>
<feature type="transmembrane region" description="Helical" evidence="9">
    <location>
        <begin position="262"/>
        <end position="280"/>
    </location>
</feature>
<feature type="topological domain" description="Extracellular" evidence="9">
    <location>
        <begin position="281"/>
        <end position="727"/>
    </location>
</feature>
<feature type="transmembrane region" description="Helical" evidence="9">
    <location>
        <begin position="728"/>
        <end position="748"/>
    </location>
</feature>
<feature type="topological domain" description="Extracellular">
    <location>
        <begin position="749"/>
        <end position="755"/>
    </location>
</feature>
<feature type="transmembrane region" description="Helical" evidence="19">
    <location>
        <begin position="756"/>
        <end position="776"/>
    </location>
</feature>
<feature type="topological domain" description="Extracellular" evidence="9">
    <location>
        <begin position="777"/>
        <end position="1132"/>
    </location>
</feature>
<feature type="transmembrane region" description="Helical" evidence="9">
    <location>
        <begin position="1133"/>
        <end position="1153"/>
    </location>
</feature>
<feature type="topological domain" description="Cytoplasmic" evidence="9">
    <location>
        <begin position="1154"/>
        <end position="1158"/>
    </location>
</feature>
<feature type="transmembrane region" description="Helical" evidence="9">
    <location>
        <begin position="1159"/>
        <end position="1179"/>
    </location>
</feature>
<feature type="topological domain" description="Lumenal" evidence="9">
    <location>
        <begin position="1180"/>
        <end position="1187"/>
    </location>
</feature>
<feature type="transmembrane region" description="Helical" evidence="9">
    <location>
        <begin position="1188"/>
        <end position="1208"/>
    </location>
</feature>
<feature type="topological domain" description="Cytoplasmic" evidence="9">
    <location>
        <begin position="1209"/>
        <end position="1293"/>
    </location>
</feature>
<feature type="transmembrane region" description="Helical" evidence="9">
    <location>
        <begin position="1294"/>
        <end position="1314"/>
    </location>
</feature>
<feature type="topological domain" description="Lumenal" evidence="9">
    <location>
        <begin position="1315"/>
        <end position="1327"/>
    </location>
</feature>
<feature type="transmembrane region" description="Helical" evidence="9">
    <location>
        <begin position="1328"/>
        <end position="1348"/>
    </location>
</feature>
<feature type="topological domain" description="Cytoplasmic" evidence="9">
    <location>
        <begin position="1349"/>
        <end position="1359"/>
    </location>
</feature>
<feature type="transmembrane region" description="Helical" evidence="9">
    <location>
        <begin position="1360"/>
        <end position="1377"/>
    </location>
</feature>
<feature type="topological domain" description="Lumenal" evidence="9">
    <location>
        <begin position="1378"/>
        <end position="1382"/>
    </location>
</feature>
<feature type="transmembrane region" description="Helical" evidence="9">
    <location>
        <begin position="1383"/>
        <end position="1403"/>
    </location>
</feature>
<feature type="topological domain" description="Cytoplasmic" evidence="9">
    <location>
        <begin position="1404"/>
        <end position="1454"/>
    </location>
</feature>
<feature type="intramembrane region" description="Helical" evidence="9">
    <location>
        <begin position="1455"/>
        <end position="1475"/>
    </location>
</feature>
<feature type="topological domain" description="Cytoplasmic" evidence="9">
    <location>
        <begin position="1476"/>
        <end position="2160"/>
    </location>
</feature>
<feature type="transmembrane region" description="Helical" evidence="9">
    <location>
        <begin position="2161"/>
        <end position="2181"/>
    </location>
</feature>
<feature type="topological domain" description="Lumenal" evidence="9">
    <location>
        <begin position="2182"/>
        <end position="2189"/>
    </location>
</feature>
<feature type="intramembrane region" description="Helical" evidence="9">
    <location>
        <begin position="2190"/>
        <end position="2210"/>
    </location>
</feature>
<feature type="topological domain" description="Lumenal" evidence="9">
    <location>
        <position position="2211"/>
    </location>
</feature>
<feature type="transmembrane region" description="Helical" evidence="9">
    <location>
        <begin position="2212"/>
        <end position="2232"/>
    </location>
</feature>
<feature type="topological domain" description="Cytoplasmic" evidence="9">
    <location>
        <begin position="2233"/>
        <end position="2244"/>
    </location>
</feature>
<feature type="transmembrane region" description="Helical; Note=Signal for NS4B" evidence="9">
    <location>
        <begin position="2245"/>
        <end position="2265"/>
    </location>
</feature>
<feature type="topological domain" description="Lumenal" evidence="9">
    <location>
        <begin position="2266"/>
        <end position="2299"/>
    </location>
</feature>
<feature type="intramembrane region" description="Helical" evidence="9">
    <location>
        <begin position="2300"/>
        <end position="2320"/>
    </location>
</feature>
<feature type="topological domain" description="Lumenal" evidence="9">
    <location>
        <begin position="2321"/>
        <end position="2343"/>
    </location>
</feature>
<feature type="intramembrane region" description="Helical" evidence="9">
    <location>
        <begin position="2344"/>
        <end position="2364"/>
    </location>
</feature>
<feature type="topological domain" description="Lumenal" evidence="9">
    <location>
        <begin position="2365"/>
        <end position="2368"/>
    </location>
</feature>
<feature type="transmembrane region" description="Helical" evidence="9">
    <location>
        <begin position="2369"/>
        <end position="2389"/>
    </location>
</feature>
<feature type="topological domain" description="Cytoplasmic" evidence="9">
    <location>
        <begin position="2390"/>
        <end position="2432"/>
    </location>
</feature>
<feature type="transmembrane region" description="Helical" evidence="9">
    <location>
        <begin position="2433"/>
        <end position="2453"/>
    </location>
</feature>
<feature type="topological domain" description="Lumenal" evidence="9">
    <location>
        <begin position="2454"/>
        <end position="2477"/>
    </location>
</feature>
<feature type="transmembrane region" description="Helical" evidence="9">
    <location>
        <begin position="2478"/>
        <end position="2498"/>
    </location>
</feature>
<feature type="topological domain" description="Cytoplasmic" evidence="9">
    <location>
        <begin position="2499"/>
        <end position="3414"/>
    </location>
</feature>
<feature type="domain" description="Peptidase S7" evidence="15">
    <location>
        <begin position="1490"/>
        <end position="1669"/>
    </location>
</feature>
<feature type="domain" description="Helicase ATP-binding" evidence="12">
    <location>
        <begin position="1675"/>
        <end position="1831"/>
    </location>
</feature>
<feature type="domain" description="Helicase C-terminal" evidence="13">
    <location>
        <begin position="1841"/>
        <end position="2000"/>
    </location>
</feature>
<feature type="domain" description="mRNA cap 0-1 NS5-type MT" evidence="16">
    <location>
        <begin position="2512"/>
        <end position="2776"/>
    </location>
</feature>
<feature type="domain" description="RdRp catalytic" evidence="11">
    <location>
        <begin position="3040"/>
        <end position="3189"/>
    </location>
</feature>
<feature type="region of interest" description="Disordered" evidence="17">
    <location>
        <begin position="1"/>
        <end position="30"/>
    </location>
</feature>
<feature type="region of interest" description="Fusion peptide" evidence="4">
    <location>
        <begin position="378"/>
        <end position="391"/>
    </location>
</feature>
<feature type="region of interest" description="Interacts with and activates NS3 protease" evidence="14">
    <location>
        <begin position="1410"/>
        <end position="1449"/>
    </location>
</feature>
<feature type="region of interest" description="Interaction with host SCRIB" evidence="18">
    <location>
        <begin position="2730"/>
        <end position="2734"/>
    </location>
</feature>
<feature type="short sequence motif" description="DEAH box" evidence="12">
    <location>
        <begin position="1779"/>
        <end position="1782"/>
    </location>
</feature>
<feature type="active site" description="Charge relay system; for serine protease NS3 activity" evidence="15">
    <location>
        <position position="1543"/>
    </location>
</feature>
<feature type="active site" description="Charge relay system; for serine protease NS3 activity" evidence="15">
    <location>
        <position position="1567"/>
    </location>
</feature>
<feature type="active site" description="Charge relay system; for serine protease NS3 activity" evidence="15">
    <location>
        <position position="1627"/>
    </location>
</feature>
<feature type="active site" description="For 2'-O-MTase activity" evidence="7">
    <location>
        <position position="2572"/>
    </location>
</feature>
<feature type="active site" description="For 2'-O-MTase activity" evidence="7">
    <location>
        <position position="2657"/>
    </location>
</feature>
<feature type="active site" description="For 2'-O-MTase activity" evidence="7">
    <location>
        <position position="2694"/>
    </location>
</feature>
<feature type="active site" description="For 2'-O-MTase activity" evidence="7">
    <location>
        <position position="2730"/>
    </location>
</feature>
<feature type="binding site" evidence="12">
    <location>
        <begin position="1688"/>
        <end position="1695"/>
    </location>
    <ligand>
        <name>ATP</name>
        <dbReference type="ChEBI" id="CHEBI:30616"/>
    </ligand>
</feature>
<feature type="binding site" evidence="16">
    <location>
        <position position="2567"/>
    </location>
    <ligand>
        <name>S-adenosyl-L-methionine</name>
        <dbReference type="ChEBI" id="CHEBI:59789"/>
    </ligand>
</feature>
<feature type="binding site" evidence="16">
    <location>
        <position position="2597"/>
    </location>
    <ligand>
        <name>S-adenosyl-L-methionine</name>
        <dbReference type="ChEBI" id="CHEBI:59789"/>
    </ligand>
</feature>
<feature type="binding site" evidence="16">
    <location>
        <position position="2598"/>
    </location>
    <ligand>
        <name>S-adenosyl-L-methionine</name>
        <dbReference type="ChEBI" id="CHEBI:59789"/>
    </ligand>
</feature>
<feature type="binding site" evidence="16">
    <location>
        <position position="2615"/>
    </location>
    <ligand>
        <name>S-adenosyl-L-methionine</name>
        <dbReference type="ChEBI" id="CHEBI:59789"/>
    </ligand>
</feature>
<feature type="binding site" evidence="16">
    <location>
        <position position="2616"/>
    </location>
    <ligand>
        <name>S-adenosyl-L-methionine</name>
        <dbReference type="ChEBI" id="CHEBI:59789"/>
    </ligand>
</feature>
<feature type="binding site" evidence="16">
    <location>
        <position position="2642"/>
    </location>
    <ligand>
        <name>S-adenosyl-L-methionine</name>
        <dbReference type="ChEBI" id="CHEBI:59789"/>
    </ligand>
</feature>
<feature type="binding site" evidence="16">
    <location>
        <position position="2643"/>
    </location>
    <ligand>
        <name>S-adenosyl-L-methionine</name>
        <dbReference type="ChEBI" id="CHEBI:59789"/>
    </ligand>
</feature>
<feature type="binding site" evidence="16">
    <location>
        <position position="2658"/>
    </location>
    <ligand>
        <name>S-adenosyl-L-methionine</name>
        <dbReference type="ChEBI" id="CHEBI:59789"/>
    </ligand>
</feature>
<feature type="binding site" evidence="16">
    <location>
        <position position="2732"/>
    </location>
    <ligand>
        <name>S-adenosyl-L-methionine</name>
        <dbReference type="ChEBI" id="CHEBI:59789"/>
    </ligand>
</feature>
<feature type="binding site" evidence="3">
    <location>
        <position position="2950"/>
    </location>
    <ligand>
        <name>Zn(2+)</name>
        <dbReference type="ChEBI" id="CHEBI:29105"/>
        <label>1</label>
    </ligand>
</feature>
<feature type="binding site" evidence="3">
    <location>
        <position position="2954"/>
    </location>
    <ligand>
        <name>Zn(2+)</name>
        <dbReference type="ChEBI" id="CHEBI:29105"/>
        <label>1</label>
    </ligand>
</feature>
<feature type="binding site" evidence="3">
    <location>
        <position position="2959"/>
    </location>
    <ligand>
        <name>Zn(2+)</name>
        <dbReference type="ChEBI" id="CHEBI:29105"/>
        <label>1</label>
    </ligand>
</feature>
<feature type="binding site" evidence="3">
    <location>
        <position position="2962"/>
    </location>
    <ligand>
        <name>Zn(2+)</name>
        <dbReference type="ChEBI" id="CHEBI:29105"/>
        <label>1</label>
    </ligand>
</feature>
<feature type="binding site" evidence="3">
    <location>
        <position position="3224"/>
    </location>
    <ligand>
        <name>Zn(2+)</name>
        <dbReference type="ChEBI" id="CHEBI:29105"/>
        <label>2</label>
    </ligand>
</feature>
<feature type="binding site" evidence="3">
    <location>
        <position position="3240"/>
    </location>
    <ligand>
        <name>Zn(2+)</name>
        <dbReference type="ChEBI" id="CHEBI:29105"/>
        <label>2</label>
    </ligand>
</feature>
<feature type="binding site" evidence="3">
    <location>
        <position position="3359"/>
    </location>
    <ligand>
        <name>Zn(2+)</name>
        <dbReference type="ChEBI" id="CHEBI:29105"/>
        <label>2</label>
    </ligand>
</feature>
<feature type="site" description="Cleavage; by viral protease NS3" evidence="1">
    <location>
        <begin position="96"/>
        <end position="97"/>
    </location>
</feature>
<feature type="site" description="Cleavage; by host signal peptidase" evidence="1">
    <location>
        <begin position="117"/>
        <end position="118"/>
    </location>
</feature>
<feature type="site" description="Cleavage; by host furin" evidence="2">
    <location>
        <begin position="205"/>
        <end position="206"/>
    </location>
</feature>
<feature type="site" description="Cleavage; by host signal peptidase" evidence="2">
    <location>
        <begin position="280"/>
        <end position="281"/>
    </location>
</feature>
<feature type="site" description="Cleavage; by host signal peptidase" evidence="1">
    <location>
        <begin position="776"/>
        <end position="777"/>
    </location>
</feature>
<feature type="site" description="Cleavage; by host" evidence="2">
    <location>
        <begin position="1128"/>
        <end position="1129"/>
    </location>
</feature>
<feature type="site" description="Cleavage; by viral protease NS3" evidence="2">
    <location>
        <begin position="1358"/>
        <end position="1359"/>
    </location>
</feature>
<feature type="site" description="Cleavage; by autolysis" evidence="1">
    <location>
        <begin position="1489"/>
        <end position="1490"/>
    </location>
</feature>
<feature type="site" description="Involved in NS3 ATPase and RTPase activities" evidence="3">
    <location>
        <position position="1949"/>
    </location>
</feature>
<feature type="site" description="Involved in NS3 ATPase and RTPase activities" evidence="3">
    <location>
        <position position="1952"/>
    </location>
</feature>
<feature type="site" description="Cleavage; by autolysis" evidence="1">
    <location>
        <begin position="2110"/>
        <end position="2111"/>
    </location>
</feature>
<feature type="site" description="Cleavage; by viral protease NS3" evidence="1">
    <location>
        <begin position="2236"/>
        <end position="2237"/>
    </location>
</feature>
<feature type="site" description="Cleavage; by host signal peptidase" evidence="1">
    <location>
        <begin position="2259"/>
        <end position="2260"/>
    </location>
</feature>
<feature type="site" description="Cleavage; by viral protease NS3" evidence="1">
    <location>
        <begin position="2511"/>
        <end position="2512"/>
    </location>
</feature>
<feature type="site" description="mRNA cap binding" evidence="16">
    <location>
        <position position="2524"/>
    </location>
</feature>
<feature type="site" description="mRNA cap binding; via carbonyl oxygen" evidence="16">
    <location>
        <position position="2527"/>
    </location>
</feature>
<feature type="site" description="mRNA cap binding" evidence="16">
    <location>
        <position position="2528"/>
    </location>
</feature>
<feature type="site" description="mRNA cap binding; via carbonyl oxygen" evidence="16">
    <location>
        <position position="2530"/>
    </location>
</feature>
<feature type="site" description="mRNA cap binding" evidence="16">
    <location>
        <position position="2535"/>
    </location>
</feature>
<feature type="site" description="mRNA cap binding" evidence="16">
    <location>
        <position position="2539"/>
    </location>
</feature>
<feature type="site" description="Essential for 2'-O-methyltransferase activity" evidence="16">
    <location>
        <position position="2572"/>
    </location>
</feature>
<feature type="site" description="Essential for 2'-O-methyltransferase and N-7 methyltransferase activity" evidence="16">
    <location>
        <position position="2657"/>
    </location>
</feature>
<feature type="site" description="mRNA cap binding" evidence="16">
    <location>
        <position position="2661"/>
    </location>
</feature>
<feature type="site" description="Essential for 2'-O-methyltransferase activity" evidence="16">
    <location>
        <position position="2694"/>
    </location>
</feature>
<feature type="site" description="mRNA cap binding" evidence="16">
    <location>
        <position position="2725"/>
    </location>
</feature>
<feature type="site" description="mRNA cap binding" evidence="16">
    <location>
        <position position="2727"/>
    </location>
</feature>
<feature type="site" description="Essential for 2'-O-methyltransferase activity" evidence="16">
    <location>
        <position position="2730"/>
    </location>
</feature>
<feature type="modified residue" description="N6-acetyllysine; by host" evidence="6">
    <location>
        <position position="1883"/>
    </location>
</feature>
<feature type="modified residue" description="Phosphoserine" evidence="1">
    <location>
        <position position="2567"/>
    </location>
</feature>
<feature type="glycosylation site" description="N-linked (GlcNAc...) asparagine; by host" evidence="10">
    <location>
        <position position="144"/>
    </location>
</feature>
<feature type="glycosylation site" description="N-linked (GlcNAc...) asparagine; by host" evidence="4 10">
    <location>
        <position position="434"/>
    </location>
</feature>
<feature type="glycosylation site" description="N-linked (GlcNAc...) asparagine; by host" evidence="10">
    <location>
        <position position="861"/>
    </location>
</feature>
<feature type="glycosylation site" description="N-linked (GlcNAc...) asparagine; by host" evidence="10">
    <location>
        <position position="983"/>
    </location>
</feature>
<feature type="glycosylation site" description="N-linked (GlcNAc...) asparagine; by host" evidence="10">
    <location>
        <position position="999"/>
    </location>
</feature>
<feature type="disulfide bond" evidence="4">
    <location>
        <begin position="283"/>
        <end position="310"/>
    </location>
</feature>
<feature type="disulfide bond" evidence="5">
    <location>
        <begin position="340"/>
        <end position="401"/>
    </location>
</feature>
<feature type="disulfide bond" evidence="4">
    <location>
        <begin position="340"/>
        <end position="396"/>
    </location>
</feature>
<feature type="disulfide bond" evidence="4">
    <location>
        <begin position="354"/>
        <end position="385"/>
    </location>
</feature>
<feature type="disulfide bond" evidence="4">
    <location>
        <begin position="372"/>
        <end position="401"/>
    </location>
</feature>
<feature type="disulfide bond" evidence="5">
    <location>
        <begin position="372"/>
        <end position="396"/>
    </location>
</feature>
<feature type="disulfide bond" evidence="4">
    <location>
        <begin position="466"/>
        <end position="570"/>
    </location>
</feature>
<feature type="disulfide bond" evidence="4">
    <location>
        <begin position="587"/>
        <end position="618"/>
    </location>
</feature>
<feature type="disulfide bond" evidence="5">
    <location>
        <begin position="780"/>
        <end position="791"/>
    </location>
</feature>
<feature type="disulfide bond" evidence="5">
    <location>
        <begin position="831"/>
        <end position="920"/>
    </location>
</feature>
<feature type="disulfide bond" evidence="5">
    <location>
        <begin position="955"/>
        <end position="1000"/>
    </location>
</feature>
<feature type="disulfide bond" evidence="5">
    <location>
        <begin position="1057"/>
        <end position="1106"/>
    </location>
</feature>
<feature type="disulfide bond" evidence="5">
    <location>
        <begin position="1068"/>
        <end position="1090"/>
    </location>
</feature>
<feature type="disulfide bond" evidence="5">
    <location>
        <begin position="1089"/>
        <end position="1093"/>
    </location>
</feature>
<feature type="mutagenesis site" description="Relocalizes RNA-directed RNA polymerase NS5 away from the host cell membrane and nucleus. Reduced JAK-STAT signalling inhibition and IFN inhibition." evidence="18">
    <original>YS</original>
    <variation>AA</variation>
    <location>
        <begin position="2733"/>
        <end position="2734"/>
    </location>
</feature>
<feature type="strand" evidence="20">
    <location>
        <begin position="1683"/>
        <end position="1686"/>
    </location>
</feature>
<feature type="turn" evidence="20">
    <location>
        <begin position="1694"/>
        <end position="1697"/>
    </location>
</feature>
<feature type="helix" evidence="20">
    <location>
        <begin position="1698"/>
        <end position="1708"/>
    </location>
</feature>
<feature type="strand" evidence="20">
    <location>
        <begin position="1713"/>
        <end position="1719"/>
    </location>
</feature>
<feature type="helix" evidence="20">
    <location>
        <begin position="1720"/>
        <end position="1729"/>
    </location>
</feature>
<feature type="turn" evidence="20">
    <location>
        <begin position="1730"/>
        <end position="1732"/>
    </location>
</feature>
<feature type="strand" evidence="20">
    <location>
        <begin position="1735"/>
        <end position="1737"/>
    </location>
</feature>
<feature type="strand" evidence="20">
    <location>
        <begin position="1752"/>
        <end position="1756"/>
    </location>
</feature>
<feature type="helix" evidence="20">
    <location>
        <begin position="1757"/>
        <end position="1764"/>
    </location>
</feature>
<feature type="strand" evidence="20">
    <location>
        <begin position="1774"/>
        <end position="1780"/>
    </location>
</feature>
<feature type="helix" evidence="20">
    <location>
        <begin position="1786"/>
        <end position="1800"/>
    </location>
</feature>
<feature type="strand" evidence="20">
    <location>
        <begin position="1805"/>
        <end position="1809"/>
    </location>
</feature>
<feature type="strand" evidence="20">
    <location>
        <begin position="1824"/>
        <end position="1831"/>
    </location>
</feature>
<feature type="helix" evidence="20">
    <location>
        <begin position="1844"/>
        <end position="1848"/>
    </location>
</feature>
<feature type="strand" evidence="20">
    <location>
        <begin position="1853"/>
        <end position="1856"/>
    </location>
</feature>
<feature type="helix" evidence="20">
    <location>
        <begin position="1860"/>
        <end position="1872"/>
    </location>
</feature>
<feature type="strand" evidence="20">
    <location>
        <begin position="1877"/>
        <end position="1881"/>
    </location>
</feature>
<feature type="turn" evidence="20">
    <location>
        <begin position="1882"/>
        <end position="1884"/>
    </location>
</feature>
<feature type="helix" evidence="20">
    <location>
        <begin position="1885"/>
        <end position="1895"/>
    </location>
</feature>
<feature type="strand" evidence="20">
    <location>
        <begin position="1898"/>
        <end position="1902"/>
    </location>
</feature>
<feature type="helix" evidence="20">
    <location>
        <begin position="1904"/>
        <end position="1907"/>
    </location>
</feature>
<feature type="strand" evidence="20">
    <location>
        <begin position="1915"/>
        <end position="1919"/>
    </location>
</feature>
<feature type="strand" evidence="20">
    <location>
        <begin position="1922"/>
        <end position="1924"/>
    </location>
</feature>
<feature type="strand" evidence="20">
    <location>
        <begin position="1927"/>
        <end position="1929"/>
    </location>
</feature>
<feature type="strand" evidence="20">
    <location>
        <begin position="1932"/>
        <end position="1934"/>
    </location>
</feature>
<feature type="strand" evidence="20">
    <location>
        <begin position="1937"/>
        <end position="1940"/>
    </location>
</feature>
<feature type="helix" evidence="20">
    <location>
        <begin position="1943"/>
        <end position="1950"/>
    </location>
</feature>
<feature type="strand" evidence="20">
    <location>
        <begin position="1960"/>
        <end position="1965"/>
    </location>
</feature>
<feature type="helix" evidence="20">
    <location>
        <begin position="1977"/>
        <end position="1987"/>
    </location>
</feature>
<feature type="strand" evidence="20">
    <location>
        <begin position="1992"/>
        <end position="1994"/>
    </location>
</feature>
<feature type="helix" evidence="20">
    <location>
        <begin position="2001"/>
        <end position="2006"/>
    </location>
</feature>
<feature type="turn" evidence="20">
    <location>
        <begin position="2011"/>
        <end position="2014"/>
    </location>
</feature>
<feature type="helix" evidence="20">
    <location>
        <begin position="2018"/>
        <end position="2030"/>
    </location>
</feature>
<feature type="helix" evidence="20">
    <location>
        <begin position="2035"/>
        <end position="2044"/>
    </location>
</feature>
<feature type="helix" evidence="20">
    <location>
        <begin position="2052"/>
        <end position="2054"/>
    </location>
</feature>
<feature type="helix" evidence="20">
    <location>
        <begin position="2059"/>
        <end position="2061"/>
    </location>
</feature>
<feature type="strand" evidence="20">
    <location>
        <begin position="2068"/>
        <end position="2070"/>
    </location>
</feature>
<feature type="strand" evidence="20">
    <location>
        <begin position="2072"/>
        <end position="2074"/>
    </location>
</feature>
<feature type="strand" evidence="20">
    <location>
        <begin position="2080"/>
        <end position="2082"/>
    </location>
</feature>
<feature type="helix" evidence="20">
    <location>
        <begin position="2090"/>
        <end position="2093"/>
    </location>
</feature>
<feature type="helix" evidence="20">
    <location>
        <begin position="2099"/>
        <end position="2106"/>
    </location>
</feature>
<feature type="strand" evidence="21">
    <location>
        <begin position="2734"/>
        <end position="2736"/>
    </location>
</feature>
<feature type="strand" evidence="22">
    <location>
        <begin position="3410"/>
        <end position="3413"/>
    </location>
</feature>
<name>POLG_TBEVH</name>
<reference key="1">
    <citation type="submission" date="1995-10" db="EMBL/GenBank/DDBJ databases">
        <authorList>
            <person name="Wallner G."/>
            <person name="Mandl C.W."/>
            <person name="Ecker M."/>
            <person name="Holzmann H."/>
            <person name="Stiasny K."/>
            <person name="Kunz C."/>
            <person name="Heinz F.X."/>
        </authorList>
    </citation>
    <scope>NUCLEOTIDE SEQUENCE [GENOMIC RNA]</scope>
</reference>
<reference key="2">
    <citation type="journal article" date="1991" name="J. Virol.">
        <title>Presence of poly(A) in a flavivirus: significant differences between the 3' noncoding regions of the genomic RNAs of tick-borne encephalitis virus strains.</title>
        <authorList>
            <person name="Mandl C.W."/>
            <person name="Kunz C."/>
            <person name="Heinz F.X."/>
        </authorList>
    </citation>
    <scope>NUCLEOTIDE SEQUENCE [GENOMIC RNA] OF 3357-3414</scope>
</reference>
<reference key="3">
    <citation type="journal article" date="2008" name="Cell. Microbiol.">
        <title>Tick-borne encephalitis virus NS5 associates with membrane protein scribble and impairs interferon-stimulated JAK-STAT signalling.</title>
        <authorList>
            <person name="Werme K."/>
            <person name="Wigerius M."/>
            <person name="Johansson M."/>
        </authorList>
    </citation>
    <scope>FUNCTION (RNA-DIRECTED RNA POLYMERASE NS5)</scope>
    <scope>INTERACTION WITH HUMAN SCRIB (RNA-DIRECTED RNA POLYMERASE NS5)</scope>
    <scope>MUTAGENESIS OF 2733-TYR-SER-2734</scope>
</reference>
<organism>
    <name type="scientific">Tick-borne encephalitis virus (strain Hypr)</name>
    <name type="common">TBEV</name>
    <dbReference type="NCBI Taxonomy" id="70733"/>
    <lineage>
        <taxon>Viruses</taxon>
        <taxon>Riboviria</taxon>
        <taxon>Orthornavirae</taxon>
        <taxon>Kitrinoviricota</taxon>
        <taxon>Flasuviricetes</taxon>
        <taxon>Amarillovirales</taxon>
        <taxon>Flaviviridae</taxon>
        <taxon>Orthoflavivirus</taxon>
        <taxon>Orthoflavivirus encephalitidis</taxon>
        <taxon>Tick-borne encephalitis virus</taxon>
    </lineage>
</organism>
<evidence type="ECO:0000250" key="1">
    <source>
        <dbReference type="UniProtKB" id="P03314"/>
    </source>
</evidence>
<evidence type="ECO:0000250" key="2">
    <source>
        <dbReference type="UniProtKB" id="P06935"/>
    </source>
</evidence>
<evidence type="ECO:0000250" key="3">
    <source>
        <dbReference type="UniProtKB" id="P14335"/>
    </source>
</evidence>
<evidence type="ECO:0000250" key="4">
    <source>
        <dbReference type="UniProtKB" id="P14336"/>
    </source>
</evidence>
<evidence type="ECO:0000250" key="5">
    <source>
        <dbReference type="UniProtKB" id="P17763"/>
    </source>
</evidence>
<evidence type="ECO:0000250" key="6">
    <source>
        <dbReference type="UniProtKB" id="Q32ZE1"/>
    </source>
</evidence>
<evidence type="ECO:0000250" key="7">
    <source>
        <dbReference type="UniProtKB" id="Q6YMS4"/>
    </source>
</evidence>
<evidence type="ECO:0000250" key="8">
    <source>
        <dbReference type="UniProtKB" id="Q9Q6P4"/>
    </source>
</evidence>
<evidence type="ECO:0000255" key="9"/>
<evidence type="ECO:0000255" key="10">
    <source>
        <dbReference type="PROSITE-ProRule" id="PRU00498"/>
    </source>
</evidence>
<evidence type="ECO:0000255" key="11">
    <source>
        <dbReference type="PROSITE-ProRule" id="PRU00539"/>
    </source>
</evidence>
<evidence type="ECO:0000255" key="12">
    <source>
        <dbReference type="PROSITE-ProRule" id="PRU00541"/>
    </source>
</evidence>
<evidence type="ECO:0000255" key="13">
    <source>
        <dbReference type="PROSITE-ProRule" id="PRU00542"/>
    </source>
</evidence>
<evidence type="ECO:0000255" key="14">
    <source>
        <dbReference type="PROSITE-ProRule" id="PRU00859"/>
    </source>
</evidence>
<evidence type="ECO:0000255" key="15">
    <source>
        <dbReference type="PROSITE-ProRule" id="PRU00860"/>
    </source>
</evidence>
<evidence type="ECO:0000255" key="16">
    <source>
        <dbReference type="PROSITE-ProRule" id="PRU00924"/>
    </source>
</evidence>
<evidence type="ECO:0000256" key="17">
    <source>
        <dbReference type="SAM" id="MobiDB-lite"/>
    </source>
</evidence>
<evidence type="ECO:0000269" key="18">
    <source>
    </source>
</evidence>
<evidence type="ECO:0000305" key="19"/>
<evidence type="ECO:0007829" key="20">
    <source>
        <dbReference type="PDB" id="7JNO"/>
    </source>
</evidence>
<evidence type="ECO:0007829" key="21">
    <source>
        <dbReference type="PDB" id="7QS9"/>
    </source>
</evidence>
<evidence type="ECO:0007829" key="22">
    <source>
        <dbReference type="PDB" id="7QSA"/>
    </source>
</evidence>
<keyword id="KW-0002">3D-structure</keyword>
<keyword id="KW-0007">Acetylation</keyword>
<keyword id="KW-1072">Activation of host autophagy by virus</keyword>
<keyword id="KW-0067">ATP-binding</keyword>
<keyword id="KW-0167">Capsid protein</keyword>
<keyword id="KW-1165">Clathrin-mediated endocytosis of virus by host</keyword>
<keyword id="KW-0165">Cleavage on pair of basic residues</keyword>
<keyword id="KW-1015">Disulfide bond</keyword>
<keyword id="KW-1170">Fusion of virus membrane with host endosomal membrane</keyword>
<keyword id="KW-1168">Fusion of virus membrane with host membrane</keyword>
<keyword id="KW-0325">Glycoprotein</keyword>
<keyword id="KW-0347">Helicase</keyword>
<keyword id="KW-1035">Host cytoplasm</keyword>
<keyword id="KW-1038">Host endoplasmic reticulum</keyword>
<keyword id="KW-1043">Host membrane</keyword>
<keyword id="KW-1048">Host nucleus</keyword>
<keyword id="KW-0945">Host-virus interaction</keyword>
<keyword id="KW-0378">Hydrolase</keyword>
<keyword id="KW-1090">Inhibition of host innate immune response by virus</keyword>
<keyword id="KW-1114">Inhibition of host interferon signaling pathway by virus</keyword>
<keyword id="KW-1105">Inhibition of host STAT1 by virus</keyword>
<keyword id="KW-1106">Inhibition of host STAT2 by virus</keyword>
<keyword id="KW-0922">Interferon antiviral system evasion</keyword>
<keyword id="KW-0472">Membrane</keyword>
<keyword id="KW-0479">Metal-binding</keyword>
<keyword id="KW-0489">Methyltransferase</keyword>
<keyword id="KW-0506">mRNA capping</keyword>
<keyword id="KW-0507">mRNA processing</keyword>
<keyword id="KW-0511">Multifunctional enzyme</keyword>
<keyword id="KW-0547">Nucleotide-binding</keyword>
<keyword id="KW-0548">Nucleotidyltransferase</keyword>
<keyword id="KW-0597">Phosphoprotein</keyword>
<keyword id="KW-0645">Protease</keyword>
<keyword id="KW-0694">RNA-binding</keyword>
<keyword id="KW-0696">RNA-directed RNA polymerase</keyword>
<keyword id="KW-0949">S-adenosyl-L-methionine</keyword>
<keyword id="KW-0964">Secreted</keyword>
<keyword id="KW-0720">Serine protease</keyword>
<keyword id="KW-0941">Suppressor of RNA silencing</keyword>
<keyword id="KW-0804">Transcription</keyword>
<keyword id="KW-0805">Transcription regulation</keyword>
<keyword id="KW-0808">Transferase</keyword>
<keyword id="KW-0812">Transmembrane</keyword>
<keyword id="KW-1133">Transmembrane helix</keyword>
<keyword id="KW-1161">Viral attachment to host cell</keyword>
<keyword id="KW-0261">Viral envelope protein</keyword>
<keyword id="KW-0899">Viral immunoevasion</keyword>
<keyword id="KW-1162">Viral penetration into host cytoplasm</keyword>
<keyword id="KW-0693">Viral RNA replication</keyword>
<keyword id="KW-0946">Virion</keyword>
<keyword id="KW-1164">Virus endocytosis by host</keyword>
<keyword id="KW-1160">Virus entry into host cell</keyword>
<keyword id="KW-0862">Zinc</keyword>
<comment type="function">
    <molecule>Capsid protein C</molecule>
    <text evidence="5">Plays a role in virus budding by binding to the cell membrane and gathering the viral RNA into a nucleocapsid that forms the core of a mature virus particle. During virus entry, may induce genome penetration into the host cytoplasm after hemifusion induced by the surface proteins. Can migrate to the cell nucleus where it modulates host functions.</text>
</comment>
<comment type="function">
    <molecule>Capsid protein C</molecule>
    <text evidence="1">Inhibits RNA silencing by interfering with host Dicer.</text>
</comment>
<comment type="function">
    <molecule>Peptide pr</molecule>
    <text evidence="5">Prevents premature fusion activity of envelope proteins in trans-Golgi by binding to envelope protein E at pH6.0. After virion release in extracellular space, gets dissociated from E dimers.</text>
</comment>
<comment type="function">
    <molecule>Protein prM</molecule>
    <text evidence="5">Acts as a chaperone for envelope protein E during intracellular virion assembly by masking and inactivating envelope protein E fusion peptide. prM is the only viral peptide matured by host furin in the trans-Golgi network probably to avoid catastrophic activation of the viral fusion activity in acidic Golgi compartment prior to virion release. prM-E cleavage is inefficient, and many virions are only partially matured. These uncleaved prM would play a role in immune evasion.</text>
</comment>
<comment type="function">
    <molecule>Small envelope protein M</molecule>
    <text evidence="5">May play a role in virus budding. Exerts cytotoxic effects by activating a mitochondrial apoptotic pathway through M ectodomain. May display a viroporin activity.</text>
</comment>
<comment type="function">
    <molecule>Envelope protein E</molecule>
    <text evidence="5">Binds to host cell surface receptor and mediates fusion between viral and cellular membranes. Envelope protein is synthesized in the endoplasmic reticulum in the form of heterodimer with protein prM. They play a role in virion budding in the ER, and the newly formed immature particle is covered with 60 spikes composed of heterodimer between precursor prM and envelope protein E. The virion is transported to the Golgi apparatus where the low pH causes dissociation of PrM-E heterodimers and formation of E homodimers. prM-E cleavage is inefficient, and many virions are only partially matured. These uncleaved prM would play a role in immune evasion.</text>
</comment>
<comment type="function">
    <molecule>Non-structural protein 1</molecule>
    <text evidence="8">Involved in immune evasion, pathogenesis and viral replication. Once cleaved off the polyprotein, is targeted to three destinations: the viral replication cycle, the plasma membrane and the extracellular compartment. Essential for viral replication. Required for formation of the replication complex and recruitment of other non-structural proteins to the ER-derived membrane structures. Excreted as a hexameric lipoparticle that plays a role against host immune response. Antagonizing the complement function. Binds to the host macrophages and dendritic cells. Inhibits signal transduction originating from Toll-like receptor 3 (TLR3).</text>
</comment>
<comment type="function">
    <molecule>Non-structural protein 2A</molecule>
    <text evidence="5">Component of the viral RNA replication complex that functions in virion assembly and antagonizes the host immune response.</text>
</comment>
<comment type="function">
    <molecule>Serine protease subunit NS2B</molecule>
    <text evidence="5 14">Required cofactor for the serine protease function of NS3 (By similarity). May have membrane-destabilizing activity and form viroporins (By similarity).</text>
</comment>
<comment type="function">
    <molecule>Serine protease NS3</molecule>
    <text evidence="15">Displays three enzymatic activities: serine protease, NTPase and RNA helicase. NS3 serine protease, in association with NS2B, performs its autocleavage and cleaves the polyprotein at dibasic sites in the cytoplasm: C-prM, NS2A-NS2B, NS2B-NS3, NS3-NS4A, NS4A-2K and NS4B-NS5. NS3 RNA helicase binds RNA and unwinds dsRNA in the 3' to 5' direction.</text>
</comment>
<comment type="function">
    <molecule>Non-structural protein 4A</molecule>
    <text evidence="8">Regulates the ATPase activity of the NS3 helicase activity. NS4A allows NS3 helicase to conserve energy during unwinding.</text>
</comment>
<comment type="function">
    <molecule>Peptide 2k</molecule>
    <text evidence="5">Functions as a signal peptide for NS4B and is required for the interferon antagonism activity of the latter.</text>
</comment>
<comment type="function">
    <molecule>Non-structural protein 4B</molecule>
    <text evidence="8">Induces the formation of ER-derived membrane vesicles where the viral replication takes place. Inhibits interferon (IFN)-induced host STAT1 phosphorylation and nuclear translocation, thereby preventing the establishment of cellular antiviral state by blocking the IFN-alpha/beta pathway. Inhibits STAT2 translocation in the nucleus after IFN-alpha treatment.</text>
</comment>
<comment type="function">
    <molecule>RNA-directed RNA polymerase NS5</molecule>
    <text evidence="5 18">Replicates the viral (+) and (-) genome, and performs the capping of genomes in the cytoplasm (By similarity). NS5 methylates viral RNA cap at guanine N-7 and ribose 2'-O positions (By similarity). Besides its role in genome replication, also prevents the establishment of cellular antiviral state by blocking the interferon-alpha/beta (IFN-alpha/beta) signaling pathway (PubMed:18042258). Inhibits host TYK2 and STAT2 phosphorylation, thereby preventing activation of JAK-STAT signaling pathway (PubMed:18042258).</text>
</comment>
<comment type="catalytic activity">
    <reaction>
        <text>Selective hydrolysis of -Xaa-Xaa-|-Yaa- bonds in which each of the Xaa can be either Arg or Lys and Yaa can be either Ser or Ala.</text>
        <dbReference type="EC" id="3.4.21.91"/>
    </reaction>
</comment>
<comment type="catalytic activity">
    <reaction evidence="11">
        <text>RNA(n) + a ribonucleoside 5'-triphosphate = RNA(n+1) + diphosphate</text>
        <dbReference type="Rhea" id="RHEA:21248"/>
        <dbReference type="Rhea" id="RHEA-COMP:14527"/>
        <dbReference type="Rhea" id="RHEA-COMP:17342"/>
        <dbReference type="ChEBI" id="CHEBI:33019"/>
        <dbReference type="ChEBI" id="CHEBI:61557"/>
        <dbReference type="ChEBI" id="CHEBI:140395"/>
        <dbReference type="EC" id="2.7.7.48"/>
    </reaction>
</comment>
<comment type="catalytic activity">
    <reaction>
        <text>a ribonucleoside 5'-triphosphate + H2O = a ribonucleoside 5'-diphosphate + phosphate + H(+)</text>
        <dbReference type="Rhea" id="RHEA:23680"/>
        <dbReference type="ChEBI" id="CHEBI:15377"/>
        <dbReference type="ChEBI" id="CHEBI:15378"/>
        <dbReference type="ChEBI" id="CHEBI:43474"/>
        <dbReference type="ChEBI" id="CHEBI:57930"/>
        <dbReference type="ChEBI" id="CHEBI:61557"/>
        <dbReference type="EC" id="3.6.1.15"/>
    </reaction>
</comment>
<comment type="catalytic activity">
    <reaction>
        <text>ATP + H2O = ADP + phosphate + H(+)</text>
        <dbReference type="Rhea" id="RHEA:13065"/>
        <dbReference type="ChEBI" id="CHEBI:15377"/>
        <dbReference type="ChEBI" id="CHEBI:15378"/>
        <dbReference type="ChEBI" id="CHEBI:30616"/>
        <dbReference type="ChEBI" id="CHEBI:43474"/>
        <dbReference type="ChEBI" id="CHEBI:456216"/>
        <dbReference type="EC" id="3.6.4.13"/>
    </reaction>
</comment>
<comment type="catalytic activity">
    <reaction evidence="16">
        <text>a 5'-end (5'-triphosphoguanosine)-ribonucleoside in mRNA + S-adenosyl-L-methionine = a 5'-end (N(7)-methyl 5'-triphosphoguanosine)-ribonucleoside in mRNA + S-adenosyl-L-homocysteine</text>
        <dbReference type="Rhea" id="RHEA:67008"/>
        <dbReference type="Rhea" id="RHEA-COMP:17166"/>
        <dbReference type="Rhea" id="RHEA-COMP:17167"/>
        <dbReference type="ChEBI" id="CHEBI:57856"/>
        <dbReference type="ChEBI" id="CHEBI:59789"/>
        <dbReference type="ChEBI" id="CHEBI:156461"/>
        <dbReference type="ChEBI" id="CHEBI:167617"/>
        <dbReference type="EC" id="2.1.1.56"/>
    </reaction>
</comment>
<comment type="catalytic activity">
    <reaction evidence="16">
        <text>a 5'-end (N(7)-methyl 5'-triphosphoguanosine)-ribonucleoside in mRNA + S-adenosyl-L-methionine = a 5'-end (N(7)-methyl 5'-triphosphoguanosine)-(2'-O-methyl-ribonucleoside) in mRNA + S-adenosyl-L-homocysteine + H(+)</text>
        <dbReference type="Rhea" id="RHEA:67020"/>
        <dbReference type="Rhea" id="RHEA-COMP:17167"/>
        <dbReference type="Rhea" id="RHEA-COMP:17168"/>
        <dbReference type="ChEBI" id="CHEBI:15378"/>
        <dbReference type="ChEBI" id="CHEBI:57856"/>
        <dbReference type="ChEBI" id="CHEBI:59789"/>
        <dbReference type="ChEBI" id="CHEBI:156461"/>
        <dbReference type="ChEBI" id="CHEBI:167609"/>
        <dbReference type="EC" id="2.1.1.57"/>
    </reaction>
</comment>
<comment type="subunit">
    <molecule>Capsid protein C</molecule>
    <text evidence="5">Homodimer (By similarity). Interacts (via N-terminus) with host EXOC1 (via C-terminus); this interaction results in EXOC1 degradation through the proteasome degradation pathway (By similarity).</text>
</comment>
<comment type="subunit">
    <molecule>Protein prM</molecule>
    <text evidence="5">Forms heterodimers with envelope protein E in the endoplasmic reticulum and Golgi (By similarity).</text>
</comment>
<comment type="subunit">
    <molecule>Envelope protein E</molecule>
    <text evidence="5">Homodimer; in the endoplasmic reticulum and Golgi (By similarity). Interacts with protein prM. Interacts with non-structural protein 1 (By similarity).</text>
</comment>
<comment type="subunit">
    <molecule>Non-structural protein 1</molecule>
    <text evidence="5">Homodimer; Homohexamer when secreted (By similarity). Interacts with envelope protein E (By similarity).</text>
</comment>
<comment type="subunit">
    <molecule>Non-structural protein 2A</molecule>
    <text evidence="1">Interacts (via N-terminus) with serine protease NS3.</text>
</comment>
<comment type="subunit">
    <molecule>Serine protease subunit NS2B</molecule>
    <text evidence="5">Forms a heterodimer with serine protease NS3 (By similarity). May form homooligomers (By similarity).</text>
</comment>
<comment type="subunit">
    <molecule>Serine protease NS3</molecule>
    <text evidence="5">Forms a heterodimer with NS2B. Interacts with NS4B (By similarity). Interacts with unphosphorylated RNA-directed RNA polymerase NS5; this interaction stimulates RNA-directed RNA polymerase NS5 guanylyltransferase activity (By similarity).</text>
</comment>
<comment type="subunit">
    <molecule>Non-structural protein 4B</molecule>
    <text evidence="5">Interacts with serine protease NS3 (By similarity).</text>
</comment>
<comment type="subunit">
    <molecule>RNA-directed RNA polymerase NS5</molecule>
    <text evidence="5 18">Homodimer (By similarity). Interacts with host STAT2; this interaction inhibits the phosphorylation of the latter, and, when all viral proteins are present (polyprotein), targets STAT2 for degradation (By similarity). Interacts with serine protease NS3 (By similarity). Interacts with host SCRIB; this interaction targets NS5 to the cell membrane periphery and nucleus, thereby allowing efficient host nuclear STAT1 inhibition (PubMed:18042258).</text>
</comment>
<comment type="subcellular location">
    <molecule>Capsid protein C</molecule>
    <subcellularLocation>
        <location evidence="5">Virion</location>
    </subcellularLocation>
    <subcellularLocation>
        <location evidence="5">Host nucleus</location>
    </subcellularLocation>
    <subcellularLocation>
        <location evidence="5">Host cytoplasm</location>
        <location evidence="5">Host perinuclear region</location>
    </subcellularLocation>
    <subcellularLocation>
        <location evidence="5">Host cytoplasm</location>
    </subcellularLocation>
</comment>
<comment type="subcellular location">
    <molecule>Peptide pr</molecule>
    <subcellularLocation>
        <location evidence="5">Secreted</location>
    </subcellularLocation>
</comment>
<comment type="subcellular location">
    <molecule>Small envelope protein M</molecule>
    <subcellularLocation>
        <location evidence="1">Virion membrane</location>
        <topology evidence="1">Multi-pass membrane protein</topology>
    </subcellularLocation>
    <subcellularLocation>
        <location evidence="1">Host endoplasmic reticulum membrane</location>
        <topology evidence="9">Multi-pass membrane protein</topology>
    </subcellularLocation>
    <text evidence="1">ER membrane retention is mediated by the transmembrane domains.</text>
</comment>
<comment type="subcellular location">
    <molecule>Envelope protein E</molecule>
    <subcellularLocation>
        <location evidence="19">Virion membrane</location>
        <topology evidence="1">Multi-pass membrane protein</topology>
    </subcellularLocation>
    <subcellularLocation>
        <location evidence="1">Host endoplasmic reticulum membrane</location>
        <topology evidence="9">Multi-pass membrane protein</topology>
    </subcellularLocation>
    <text evidence="1">ER membrane retention is mediated by the transmembrane domains.</text>
</comment>
<comment type="subcellular location">
    <molecule>Non-structural protein 1</molecule>
    <subcellularLocation>
        <location evidence="5">Secreted</location>
    </subcellularLocation>
    <subcellularLocation>
        <location>Host endoplasmic reticulum membrane</location>
        <topology>Peripheral membrane protein</topology>
        <orientation evidence="5">Lumenal side</orientation>
    </subcellularLocation>
    <text evidence="8">Located in RE-derived vesicles hosting the replication complex.</text>
</comment>
<comment type="subcellular location">
    <molecule>Non-structural protein 2A</molecule>
    <subcellularLocation>
        <location evidence="3">Host endoplasmic reticulum membrane</location>
        <topology evidence="5">Multi-pass membrane protein</topology>
    </subcellularLocation>
</comment>
<comment type="subcellular location">
    <molecule>Serine protease subunit NS2B</molecule>
    <subcellularLocation>
        <location>Host endoplasmic reticulum membrane</location>
        <topology evidence="5">Multi-pass membrane protein</topology>
    </subcellularLocation>
</comment>
<comment type="subcellular location">
    <molecule>Serine protease NS3</molecule>
    <subcellularLocation>
        <location evidence="15">Host endoplasmic reticulum membrane</location>
        <topology evidence="15">Peripheral membrane protein</topology>
        <orientation evidence="15">Cytoplasmic side</orientation>
    </subcellularLocation>
    <text evidence="15">Remains non-covalently associated to serine protease subunit NS2B.</text>
</comment>
<comment type="subcellular location">
    <molecule>Non-structural protein 4A</molecule>
    <subcellularLocation>
        <location evidence="3">Host endoplasmic reticulum membrane</location>
        <topology evidence="5">Multi-pass membrane protein</topology>
    </subcellularLocation>
    <text evidence="5">Located in RE-associated vesicles hosting the replication complex.</text>
</comment>
<comment type="subcellular location">
    <molecule>Non-structural protein 4B</molecule>
    <subcellularLocation>
        <location evidence="5">Host endoplasmic reticulum membrane</location>
        <topology evidence="5">Multi-pass membrane protein</topology>
    </subcellularLocation>
    <text evidence="8">Located in RE-derived vesicles hosting the replication complex.</text>
</comment>
<comment type="subcellular location">
    <molecule>RNA-directed RNA polymerase NS5</molecule>
    <subcellularLocation>
        <location>Host endoplasmic reticulum membrane</location>
        <topology>Peripheral membrane protein</topology>
        <orientation>Cytoplasmic side</orientation>
    </subcellularLocation>
    <subcellularLocation>
        <location evidence="2">Host nucleus</location>
    </subcellularLocation>
    <text evidence="5">Located in RE-associated vesicles hosting the replication complex. NS5 protein is mainly localized in the nucleus rather than in ER vesicles.</text>
</comment>
<comment type="domain">
    <text evidence="5">The transmembrane domains of the small envelope protein M and envelope protein E contain an endoplasmic reticulum retention signal.</text>
</comment>
<comment type="PTM">
    <molecule>Genome polyprotein</molecule>
    <text evidence="5">Specific enzymatic cleavages in vivo yield mature proteins. Cleavages in the lumen of endoplasmic reticulum are performed by host signal peptidase, whereas cleavages in the cytoplasmic side are performed by serine protease NS3. Signal cleavage at the 2K-4B site requires a prior NS3 protease-mediated cleavage at the 4A-2K site.</text>
</comment>
<comment type="PTM">
    <molecule>Protein prM</molecule>
    <text evidence="5">Cleaved in post-Golgi vesicles by a host furin, releasing the mature small envelope protein M, and peptide pr. This cleavage is incomplete as up to 30% of viral particles still carry uncleaved prM.</text>
</comment>
<comment type="PTM">
    <molecule>Envelope protein E</molecule>
    <text evidence="5">N-glycosylated.</text>
</comment>
<comment type="PTM">
    <molecule>Non-structural protein 1</molecule>
    <text evidence="5">N-glycosylated. The excreted form is glycosylated and this is required for efficient secretion of the protein from infected cells.</text>
</comment>
<comment type="PTM">
    <molecule>Serine protease NS3</molecule>
    <text evidence="6">Acetylated by host KAT5. Acetylation modulates NS3 RNA-binding and unwinding activities and plays an important positive role for viral replication.</text>
</comment>
<comment type="PTM">
    <molecule>RNA-directed RNA polymerase NS5</molecule>
    <text evidence="5">Phosphorylated on serines residues. This phosphorylation may trigger NS5 nuclear localization.</text>
</comment>
<comment type="miscellaneous">
    <text>The non-structural protein NS1 presents 2. alternative cleavage sites for its C-terminus (either at position 1128 or at 1190), which may define a soluble or a membrane-bound form of NS1.</text>
</comment>
<comment type="similarity">
    <text evidence="16">In the N-terminal section; belongs to the class I-like SAM-binding methyltransferase superfamily. mRNA cap 0-1 NS5-type methyltransferase family.</text>
</comment>
<organismHost>
    <name type="scientific">Homo sapiens</name>
    <name type="common">Human</name>
    <dbReference type="NCBI Taxonomy" id="9606"/>
</organismHost>
<organismHost>
    <name type="scientific">Ixodes persulcatus</name>
    <name type="common">Taiga tick</name>
    <dbReference type="NCBI Taxonomy" id="34615"/>
</organismHost>
<organismHost>
    <name type="scientific">Ixodes ricinus</name>
    <name type="common">Common tick</name>
    <name type="synonym">Acarus ricinus</name>
    <dbReference type="NCBI Taxonomy" id="34613"/>
</organismHost>
<accession>Q01299</accession>
<protein>
    <recommendedName>
        <fullName>Genome polyprotein</fullName>
    </recommendedName>
    <component>
        <recommendedName>
            <fullName>Peptide 2k</fullName>
        </recommendedName>
    </component>
    <component>
        <recommendedName>
            <fullName>Capsid protein C</fullName>
        </recommendedName>
        <alternativeName>
            <fullName>Core protein</fullName>
        </alternativeName>
    </component>
    <component>
        <recommendedName>
            <fullName>Protein prM</fullName>
        </recommendedName>
    </component>
    <component>
        <recommendedName>
            <fullName>Peptide pr</fullName>
        </recommendedName>
    </component>
    <component>
        <recommendedName>
            <fullName>Small envelope protein M</fullName>
        </recommendedName>
        <alternativeName>
            <fullName>Matrix protein</fullName>
        </alternativeName>
    </component>
    <component>
        <recommendedName>
            <fullName>Envelope protein E</fullName>
        </recommendedName>
    </component>
    <component>
        <recommendedName>
            <fullName>Non-structural protein 1</fullName>
            <shortName>NS1</shortName>
        </recommendedName>
    </component>
    <component>
        <recommendedName>
            <fullName>Non-structural protein 2A</fullName>
            <shortName>NS2A</shortName>
        </recommendedName>
    </component>
    <component>
        <recommendedName>
            <fullName>Serine protease subunit NS2B</fullName>
        </recommendedName>
        <alternativeName>
            <fullName>Flavivirin protease NS2B regulatory subunit</fullName>
        </alternativeName>
        <alternativeName>
            <fullName>Non-structural protein 2B</fullName>
        </alternativeName>
    </component>
    <component>
        <recommendedName>
            <fullName>Serine protease NS3</fullName>
            <ecNumber>3.4.21.91</ecNumber>
            <ecNumber>3.6.1.15</ecNumber>
            <ecNumber>3.6.4.13</ecNumber>
        </recommendedName>
        <alternativeName>
            <fullName>Flavivirin protease NS3 catalytic subunit</fullName>
        </alternativeName>
        <alternativeName>
            <fullName>Non-structural protein 3</fullName>
        </alternativeName>
    </component>
    <component>
        <recommendedName>
            <fullName>Non-structural protein 4A</fullName>
            <shortName>NS4A</shortName>
        </recommendedName>
    </component>
    <component>
        <recommendedName>
            <fullName>Non-structural protein 4B</fullName>
            <shortName>NS4B</shortName>
        </recommendedName>
    </component>
    <component>
        <recommendedName>
            <fullName>RNA-directed RNA polymerase NS5</fullName>
            <ecNumber evidence="16">2.1.1.56</ecNumber>
            <ecNumber evidence="16">2.1.1.57</ecNumber>
            <ecNumber evidence="11">2.7.7.48</ecNumber>
        </recommendedName>
        <alternativeName>
            <fullName>Non-structural protein 5</fullName>
        </alternativeName>
    </component>
</protein>
<sequence length="3414" mass="378545">MVKKAILKGKGGGPPRRVSKETATKTRQPRVQMPNGLVLMRMMGILWHAVAGTARNPVLKAFWNSVPLKQATAALRKIKRTVSALMVGLQKRGKRRSATDWMSWLLVITLLGMTIAATVRKERDGSTVIRAEGKDAATQVRVENGTCVILATDMGSWCDDSLSYECVTIDQGEEPVDVDCFCRNVDGVYLEYGRCGKQEGSRTRRSVLIPSHAQGELTGRGHKWLEGDSLRTHLTRVEGWVWKNRLLALAMVTVVWLTLESVVTRVAVLVVLLCLAPVYASRCTHLENRDFVTGTQGTTRVTLVLELGGCVTITAEGKPSMDVWLDAIYQENPAQTREYCLHAKLSDTKVAARCPTMGPATLAEEHQGGTVCKRDQSDRGWGNHCGLFGKGSIVACVKAACEAKKKATGHVYDANKIVYTVKVEPHTGDYVAANETHSGRKTASFTVSSEKTILTMGEYGDVSLLCRVASGVDLAQTVILELDKTVEHLPTAWQVHRDWFNDLALPWKHEGARNWNNAERLVEFGAPHAVKMDVYNLGDQTGVLLKALAGVPVAHIEGTKYHLKSGHVTCEVGLEKLKMKGLTYTMCDKTKFTWKRAPTDSGHDTVVMEVTFSGTKPCRIPVRAVAHGSPDVNVAMLITPNPTIENNGGGFIEMQLPPGDNIIYVGELSYQWFQKGSSIGRVFQKTKKGIERLTVIGEHAWDFGSAGGFLSSIGKALHTVLGGAFNSIFGGVGFLPKLLLGVALAWLGLNMRNPTMSMSFLLAGVLVLAMTLGVGADVGCAVDTERMELRCGEGLVVWREVSEWYDNYAYYPETPGALASAIKETFEEGSCGVVPQNRLEMAMWRSSVTELNLALAEGEANLTVMVDKFDPTDYRGGVPGLLKKGKDIKVSWKSWGHSMIWSIPEAPRRFMVGTEGQSECPLERRKTGVFTVAEFGVGLRTKVFLDFRQEPTHECDTGVMGAAVKNGMAIHTDQSLWMRSMKNDTGTYIVELLVTDLRNCSWPASHTIDNADVVDSELFLPASLAGPRSWYNRIPGYSEQVKGPWKHTPIRVIREECPGTTVTINAKCDKRGASVRSTTESGKVIPEWCCRACTMPPVTFRTGTDCWYAMEIRPVHDQGGLVRSMVVADNGELLSEGGVPGIVALFVVLEYIIRRRPSTGSTVVWGGIVVLALLVTGMVRMESLVRYVVAVGITFHLELGPEIVALMLLQAVFELRVGLLSAFALRRSLTVREMVTTYFLLLVLELGLPSANLEDFWKWGDALAMGALIFRACTAEGKTGAGLLLMALMTQQDVVTVHHGLVCFLSAASACSIWRLLRGHREQKGLTWIVPLARLLGGEGSGIRLLAFWELSAHRGRRSFSEPLTVVGVMLTLASGMMRHTSQEALCALAVASFLLLMLVLGTRKMQLVAEWSGCVEWHPELVNEGGEVSLRVRQDAMGNFHLTELEKEERMMAFWLIAGLAASAIHWSGIIGVMGLWTLTKMLRSSRRSDLVFSGQGGRERGDRPFEVKDGVYRIFSPGLFWGQNQVGVGYGSKGVLHTMWHVTRGAALSIDDAVAGPYWADVREDVVCYGGAWSLEEKWKGETVQVHAFPPGKAHEVHQCQPGELILDTGRKLGAIPIDLVKGTSGSPILNAQGVVVGLYGNGLKTNETYVSSIAQGEAEKSRPNLPQAVVGTGWTSKGQITVLDMHPGSGKTHRVLPELIRQCIDRRLRTLVLAPTRVVLKEMERALNGKRVRFHSPAVSDQQAGGAIVDVMCHATYVNRRLLPQGRQNWEVAIMDEAHWTDPHSIAARGHLYTLAKENKCALVLMTATPPGKSEPFPESNGAITSEERQIPNGEWRDGFDWITEYEGRTAWFVPSIAKGGAIARTLRQKGKSVICLNSKTFEKDYSRVRDEKPDFVVTTDISEMGANLDVSRVIDGRTNIKPEEVDGKVELTGTRRVTTASAAQRRGRVGRQDGRTDEYIYSGQCDDDDSGLVQWKEAQILLDNITTLRGPVATFYGPEQDKMPEVAGHFRLTEEKRKHFRHLLTHCDFTPWLAWHVAANVSSVTDRSWTWEGPEANAVDEASGGLVTFRSPNGAERTLRPVWKDARMFKEGRDIKEFVAYASGRRSFGDVLTGMSGVPELLRHRCVSALDVFYTLMHEKPDSRAMRMAERDAPEAFLTMVEMMVLGLATLGVIWCFVVRTSISRMMLGTLVLLASLLLLWAGGVGYGNMAGVALIFYTLLTVLQPEAGKQRSSDDNKLAYFLLTLCSLAGLVAANEMGFLEKTKADLSTVLWSEREEPRPWSEWTNVDIQPARSWGTYVLVVSLFTPYIIHQLQTKIQQLVNSAVASGAQAMRDLGGGAPFFGVAGHVMTLGVVSLIGATPTSLMVGVGLAALHLAIVVSGLEAELTQRAHKVFFSAMVRNPMVDGDVINPFGEGEAKPALYERRMSLVLAIVLCLMSVVMNRTVASITEASAVGLAAAGQLLRPEADTLWTMPVACGMSGVVRGSLWGFLPLGHRLWLRASGGRRGGSEGDTLGDLWKRRLNNCTREEFFVYRRTGILETERDKARELLRRGETNMGLAVSRGTAKLAWLEERGYATLKGEVVDLGCGRGGWSYYAASRPAVMSVRAYTIGGRGHEAPKMVTSLGWNLIKFRSGMDVFSMQPHRADTVMCDIGESSPDAAVEGERTRKVILLMEQWKNRNPTAACVFKVLAPYRPEVIEALHRFQLQWGGGLVRTPFSRNSTHEMYYSTAVTGNIVNSVNVQSRKLLARFGDQRGPTRVPELDLGVGTRCVVLAEDKVKEQDVQERIKALREQYSETWHMDEEHPYRTWQYWGSYRTAPTGSAASLINGVVKLLSWPWNAREDVVRMAMTDTTAFGQQRVFKDKVDTKAQEPQPGTRVIMRAVNDWILERLAQKSKPRMCSREEFIAKVKSNAALGAWSDEQNRWASAREAVEDPAFWHLVDEERERHLMGRCAHCVYNMMGKREKKLGEFGVAKGSRAIWYMWLGSRFLEFEALGFLNEDHWASRESSGAGVEGISLNYLGWHLKKLSTLNGGLFYADDTAGWDTKVTNADLEDEEQILRYMEGEHKQLATTIMQKAYHAKVVKVARPSRDGGCIMDVITRRDQRGSGQVVTYALNTLTNIKVQLIRMMEGEGVIEAADAHNPRLLRVERWLKEHGEERLGRMLVSGDDCVVRPLDDRFGKALYFLNDMAKTRKDIGEWEHSAGLSSWEEVPFCSHHFHELVMKDGRTLVVPCRDQDELVGRARISPGCGWSVRETACLSKAYGQMWLLSYFHRRDLRTLGLAINSAVPVDWVPTGRTTWSIHASGAWMTTEDMLDVWNRVWILDNPFMQNKGKVMEWRDVPYLPKAQDMLCSSLVGRKERAEWAKNIWGAVEKVRKMIGPEKFKDYLSCMDRHDLHWELRLESSII</sequence>
<dbReference type="EC" id="3.4.21.91"/>
<dbReference type="EC" id="3.6.1.15"/>
<dbReference type="EC" id="3.6.4.13"/>
<dbReference type="EC" id="2.1.1.56" evidence="16"/>
<dbReference type="EC" id="2.1.1.57" evidence="16"/>
<dbReference type="EC" id="2.7.7.48" evidence="11"/>
<dbReference type="EMBL" id="U39292">
    <property type="protein sequence ID" value="AAB53095.1"/>
    <property type="molecule type" value="Genomic_RNA"/>
</dbReference>
<dbReference type="EMBL" id="AH002418">
    <property type="protein sequence ID" value="AAA47904.1"/>
    <property type="molecule type" value="Genomic_RNA"/>
</dbReference>
<dbReference type="PDB" id="5O6A">
    <property type="method" value="EM"/>
    <property type="resolution" value="3.90 A"/>
    <property type="chains" value="A/B/C/D=281-776, D/E/F=206-280"/>
</dbReference>
<dbReference type="PDB" id="5O6V">
    <property type="method" value="EM"/>
    <property type="resolution" value="3.90 A"/>
    <property type="chains" value="A/B/C/D=281-776, D/E/F=206-280"/>
</dbReference>
<dbReference type="PDB" id="7JNO">
    <property type="method" value="X-ray"/>
    <property type="resolution" value="1.95 A"/>
    <property type="chains" value="A=1676-2110"/>
</dbReference>
<dbReference type="PDB" id="7QS9">
    <property type="method" value="X-ray"/>
    <property type="resolution" value="1.80 A"/>
    <property type="chains" value="C/E=2730-2737"/>
</dbReference>
<dbReference type="PDB" id="7QSA">
    <property type="method" value="X-ray"/>
    <property type="resolution" value="2.02 A"/>
    <property type="chains" value="C=3407-3414"/>
</dbReference>
<dbReference type="PDB" id="8ECH">
    <property type="method" value="X-ray"/>
    <property type="resolution" value="2.05 A"/>
    <property type="chains" value="C=76-96"/>
</dbReference>
<dbReference type="PDB" id="8QRH">
    <property type="method" value="EM"/>
    <property type="resolution" value="3.60 A"/>
    <property type="chains" value="D/E/F=207-277"/>
</dbReference>
<dbReference type="PDBsum" id="5O6A"/>
<dbReference type="PDBsum" id="5O6V"/>
<dbReference type="PDBsum" id="7JNO"/>
<dbReference type="PDBsum" id="7QS9"/>
<dbReference type="PDBsum" id="7QSA"/>
<dbReference type="PDBsum" id="8ECH"/>
<dbReference type="PDBsum" id="8QRH"/>
<dbReference type="EMDB" id="EMD-17945"/>
<dbReference type="EMDB" id="EMD-18614"/>
<dbReference type="EMDB" id="EMD-3752"/>
<dbReference type="EMDB" id="EMD-3754"/>
<dbReference type="SMR" id="Q01299"/>
<dbReference type="ABCD" id="Q01299">
    <property type="antibodies" value="5 sequenced antibodies"/>
</dbReference>
<dbReference type="BRENDA" id="2.7.7.48">
    <property type="organism ID" value="17704"/>
</dbReference>
<dbReference type="Proteomes" id="UP000007400">
    <property type="component" value="Genome"/>
</dbReference>
<dbReference type="GO" id="GO:0005576">
    <property type="term" value="C:extracellular region"/>
    <property type="evidence" value="ECO:0007669"/>
    <property type="project" value="UniProtKB-SubCell"/>
</dbReference>
<dbReference type="GO" id="GO:0044167">
    <property type="term" value="C:host cell endoplasmic reticulum membrane"/>
    <property type="evidence" value="ECO:0007669"/>
    <property type="project" value="UniProtKB-SubCell"/>
</dbReference>
<dbReference type="GO" id="GO:0042025">
    <property type="term" value="C:host cell nucleus"/>
    <property type="evidence" value="ECO:0007669"/>
    <property type="project" value="UniProtKB-SubCell"/>
</dbReference>
<dbReference type="GO" id="GO:0044220">
    <property type="term" value="C:host cell perinuclear region of cytoplasm"/>
    <property type="evidence" value="ECO:0007669"/>
    <property type="project" value="UniProtKB-SubCell"/>
</dbReference>
<dbReference type="GO" id="GO:0016020">
    <property type="term" value="C:membrane"/>
    <property type="evidence" value="ECO:0007669"/>
    <property type="project" value="UniProtKB-KW"/>
</dbReference>
<dbReference type="GO" id="GO:0019028">
    <property type="term" value="C:viral capsid"/>
    <property type="evidence" value="ECO:0007669"/>
    <property type="project" value="UniProtKB-KW"/>
</dbReference>
<dbReference type="GO" id="GO:0019031">
    <property type="term" value="C:viral envelope"/>
    <property type="evidence" value="ECO:0007669"/>
    <property type="project" value="UniProtKB-KW"/>
</dbReference>
<dbReference type="GO" id="GO:0055036">
    <property type="term" value="C:virion membrane"/>
    <property type="evidence" value="ECO:0007669"/>
    <property type="project" value="UniProtKB-SubCell"/>
</dbReference>
<dbReference type="GO" id="GO:0005524">
    <property type="term" value="F:ATP binding"/>
    <property type="evidence" value="ECO:0007669"/>
    <property type="project" value="UniProtKB-KW"/>
</dbReference>
<dbReference type="GO" id="GO:0016887">
    <property type="term" value="F:ATP hydrolysis activity"/>
    <property type="evidence" value="ECO:0007669"/>
    <property type="project" value="RHEA"/>
</dbReference>
<dbReference type="GO" id="GO:0003725">
    <property type="term" value="F:double-stranded RNA binding"/>
    <property type="evidence" value="ECO:0007669"/>
    <property type="project" value="InterPro"/>
</dbReference>
<dbReference type="GO" id="GO:0046872">
    <property type="term" value="F:metal ion binding"/>
    <property type="evidence" value="ECO:0007669"/>
    <property type="project" value="UniProtKB-KW"/>
</dbReference>
<dbReference type="GO" id="GO:0004483">
    <property type="term" value="F:mRNA (nucleoside-2'-O-)-methyltransferase activity"/>
    <property type="evidence" value="ECO:0007669"/>
    <property type="project" value="UniProtKB-EC"/>
</dbReference>
<dbReference type="GO" id="GO:0004482">
    <property type="term" value="F:mRNA 5'-cap (guanine-N7-)-methyltransferase activity"/>
    <property type="evidence" value="ECO:0007669"/>
    <property type="project" value="UniProtKB-EC"/>
</dbReference>
<dbReference type="GO" id="GO:0046983">
    <property type="term" value="F:protein dimerization activity"/>
    <property type="evidence" value="ECO:0007669"/>
    <property type="project" value="InterPro"/>
</dbReference>
<dbReference type="GO" id="GO:0003724">
    <property type="term" value="F:RNA helicase activity"/>
    <property type="evidence" value="ECO:0007669"/>
    <property type="project" value="UniProtKB-EC"/>
</dbReference>
<dbReference type="GO" id="GO:0003968">
    <property type="term" value="F:RNA-directed RNA polymerase activity"/>
    <property type="evidence" value="ECO:0007669"/>
    <property type="project" value="UniProtKB-KW"/>
</dbReference>
<dbReference type="GO" id="GO:0004252">
    <property type="term" value="F:serine-type endopeptidase activity"/>
    <property type="evidence" value="ECO:0007669"/>
    <property type="project" value="InterPro"/>
</dbReference>
<dbReference type="GO" id="GO:0005198">
    <property type="term" value="F:structural molecule activity"/>
    <property type="evidence" value="ECO:0007669"/>
    <property type="project" value="InterPro"/>
</dbReference>
<dbReference type="GO" id="GO:0075512">
    <property type="term" value="P:clathrin-dependent endocytosis of virus by host cell"/>
    <property type="evidence" value="ECO:0007669"/>
    <property type="project" value="UniProtKB-KW"/>
</dbReference>
<dbReference type="GO" id="GO:0039654">
    <property type="term" value="P:fusion of virus membrane with host endosome membrane"/>
    <property type="evidence" value="ECO:0007669"/>
    <property type="project" value="UniProtKB-KW"/>
</dbReference>
<dbReference type="GO" id="GO:0006508">
    <property type="term" value="P:proteolysis"/>
    <property type="evidence" value="ECO:0007669"/>
    <property type="project" value="UniProtKB-KW"/>
</dbReference>
<dbReference type="GO" id="GO:0039520">
    <property type="term" value="P:symbiont-mediated activation of host autophagy"/>
    <property type="evidence" value="ECO:0007669"/>
    <property type="project" value="UniProtKB-KW"/>
</dbReference>
<dbReference type="GO" id="GO:0052170">
    <property type="term" value="P:symbiont-mediated suppression of host innate immune response"/>
    <property type="evidence" value="ECO:0007669"/>
    <property type="project" value="UniProtKB-KW"/>
</dbReference>
<dbReference type="GO" id="GO:0039563">
    <property type="term" value="P:symbiont-mediated suppression of host JAK-STAT cascade via inhibition of STAT1 activity"/>
    <property type="evidence" value="ECO:0000314"/>
    <property type="project" value="UniProtKB"/>
</dbReference>
<dbReference type="GO" id="GO:0039564">
    <property type="term" value="P:symbiont-mediated suppression of host JAK-STAT cascade via inhibition of STAT2 activity"/>
    <property type="evidence" value="ECO:0007669"/>
    <property type="project" value="UniProtKB-KW"/>
</dbReference>
<dbReference type="GO" id="GO:0039502">
    <property type="term" value="P:symbiont-mediated suppression of host type I interferon-mediated signaling pathway"/>
    <property type="evidence" value="ECO:0000314"/>
    <property type="project" value="UniProtKB"/>
</dbReference>
<dbReference type="GO" id="GO:0039694">
    <property type="term" value="P:viral RNA genome replication"/>
    <property type="evidence" value="ECO:0007669"/>
    <property type="project" value="InterPro"/>
</dbReference>
<dbReference type="GO" id="GO:0019062">
    <property type="term" value="P:virion attachment to host cell"/>
    <property type="evidence" value="ECO:0007669"/>
    <property type="project" value="UniProtKB-KW"/>
</dbReference>
<dbReference type="CDD" id="cd20761">
    <property type="entry name" value="capping_2-OMTase_Flaviviridae"/>
    <property type="match status" value="1"/>
</dbReference>
<dbReference type="CDD" id="cd17931">
    <property type="entry name" value="DEXHc_viral_Ns3"/>
    <property type="match status" value="1"/>
</dbReference>
<dbReference type="CDD" id="cd12149">
    <property type="entry name" value="Flavi_E_C"/>
    <property type="match status" value="1"/>
</dbReference>
<dbReference type="CDD" id="cd23204">
    <property type="entry name" value="Flavivirus_RdRp"/>
    <property type="match status" value="1"/>
</dbReference>
<dbReference type="FunFam" id="1.20.1280.260:FF:000001">
    <property type="entry name" value="Envelope glycoprotein"/>
    <property type="match status" value="1"/>
</dbReference>
<dbReference type="FunFam" id="1.10.8.970:FF:000005">
    <property type="entry name" value="Genome polyprotein"/>
    <property type="match status" value="1"/>
</dbReference>
<dbReference type="FunFam" id="2.40.10.120:FF:000016">
    <property type="entry name" value="Genome polyprotein"/>
    <property type="match status" value="1"/>
</dbReference>
<dbReference type="FunFam" id="2.60.40.350:FF:000003">
    <property type="entry name" value="Genome polyprotein"/>
    <property type="match status" value="1"/>
</dbReference>
<dbReference type="FunFam" id="3.30.70.2840:FF:000002">
    <property type="entry name" value="Genome polyprotein"/>
    <property type="match status" value="1"/>
</dbReference>
<dbReference type="FunFam" id="3.30.70.2840:FF:000004">
    <property type="entry name" value="Genome polyprotein"/>
    <property type="match status" value="1"/>
</dbReference>
<dbReference type="Gene3D" id="1.10.260.90">
    <property type="match status" value="1"/>
</dbReference>
<dbReference type="Gene3D" id="1.20.1280.260">
    <property type="match status" value="1"/>
</dbReference>
<dbReference type="Gene3D" id="2.40.10.120">
    <property type="match status" value="1"/>
</dbReference>
<dbReference type="Gene3D" id="2.60.40.350">
    <property type="match status" value="1"/>
</dbReference>
<dbReference type="Gene3D" id="1.10.8.970">
    <property type="entry name" value="Flavivirus envelope glycoprotein M-like"/>
    <property type="match status" value="1"/>
</dbReference>
<dbReference type="Gene3D" id="2.60.260.50">
    <property type="entry name" value="Flavivirus polyprotein propeptide domain"/>
    <property type="match status" value="1"/>
</dbReference>
<dbReference type="Gene3D" id="3.30.70.2840">
    <property type="entry name" value="Flavivirus RNA-directed RNA polymerase, thumb domain"/>
    <property type="match status" value="3"/>
</dbReference>
<dbReference type="Gene3D" id="3.40.50.300">
    <property type="entry name" value="P-loop containing nucleotide triphosphate hydrolases"/>
    <property type="match status" value="2"/>
</dbReference>
<dbReference type="Gene3D" id="2.60.98.10">
    <property type="entry name" value="Tick-borne Encephalitis virus Glycoprotein, domain 1"/>
    <property type="match status" value="1"/>
</dbReference>
<dbReference type="Gene3D" id="3.40.50.150">
    <property type="entry name" value="Vaccinia Virus protein VP39"/>
    <property type="match status" value="1"/>
</dbReference>
<dbReference type="Gene3D" id="3.30.67.10">
    <property type="entry name" value="Viral Envelope Glycoprotein, domain 2"/>
    <property type="match status" value="1"/>
</dbReference>
<dbReference type="Gene3D" id="3.30.387.10">
    <property type="entry name" value="Viral Envelope Glycoprotein, domain 3"/>
    <property type="match status" value="1"/>
</dbReference>
<dbReference type="InterPro" id="IPR043502">
    <property type="entry name" value="DNA/RNA_pol_sf"/>
</dbReference>
<dbReference type="InterPro" id="IPR000069">
    <property type="entry name" value="Env_glycoprot_M_flavivir"/>
</dbReference>
<dbReference type="InterPro" id="IPR038302">
    <property type="entry name" value="Env_glycoprot_M_sf_flavivir"/>
</dbReference>
<dbReference type="InterPro" id="IPR013755">
    <property type="entry name" value="Flav_gly_cen_dom_subdom1"/>
</dbReference>
<dbReference type="InterPro" id="IPR001122">
    <property type="entry name" value="Flavi_capsidC"/>
</dbReference>
<dbReference type="InterPro" id="IPR011492">
    <property type="entry name" value="Flavi_DEAD"/>
</dbReference>
<dbReference type="InterPro" id="IPR027287">
    <property type="entry name" value="Flavi_E_Ig-like"/>
</dbReference>
<dbReference type="InterPro" id="IPR026470">
    <property type="entry name" value="Flavi_E_Stem/Anchor_dom"/>
</dbReference>
<dbReference type="InterPro" id="IPR038345">
    <property type="entry name" value="Flavi_E_Stem/Anchor_dom_sf"/>
</dbReference>
<dbReference type="InterPro" id="IPR011998">
    <property type="entry name" value="Flavi_Glycoprot_E_cen/dimer"/>
</dbReference>
<dbReference type="InterPro" id="IPR001157">
    <property type="entry name" value="Flavi_NS1"/>
</dbReference>
<dbReference type="InterPro" id="IPR000752">
    <property type="entry name" value="Flavi_NS2A"/>
</dbReference>
<dbReference type="InterPro" id="IPR000487">
    <property type="entry name" value="Flavi_NS2B"/>
</dbReference>
<dbReference type="InterPro" id="IPR001850">
    <property type="entry name" value="Flavi_NS3_S7"/>
</dbReference>
<dbReference type="InterPro" id="IPR000404">
    <property type="entry name" value="Flavi_NS4A"/>
</dbReference>
<dbReference type="InterPro" id="IPR001528">
    <property type="entry name" value="Flavi_NS4B"/>
</dbReference>
<dbReference type="InterPro" id="IPR046811">
    <property type="entry name" value="Flavi_NS5_thumb"/>
</dbReference>
<dbReference type="InterPro" id="IPR002535">
    <property type="entry name" value="Flavi_propep"/>
</dbReference>
<dbReference type="InterPro" id="IPR038688">
    <property type="entry name" value="Flavi_propep_sf"/>
</dbReference>
<dbReference type="InterPro" id="IPR047530">
    <property type="entry name" value="Flavi_RdRp"/>
</dbReference>
<dbReference type="InterPro" id="IPR000208">
    <property type="entry name" value="Flavi_RdRp_fingers/palm"/>
</dbReference>
<dbReference type="InterPro" id="IPR000336">
    <property type="entry name" value="Flavivir/Alphavir_Ig-like_sf"/>
</dbReference>
<dbReference type="InterPro" id="IPR014412">
    <property type="entry name" value="Gen_Poly_FLV"/>
</dbReference>
<dbReference type="InterPro" id="IPR036253">
    <property type="entry name" value="Glycoprot_cen/dimer_sf"/>
</dbReference>
<dbReference type="InterPro" id="IPR038055">
    <property type="entry name" value="Glycoprot_E_dimer_dom"/>
</dbReference>
<dbReference type="InterPro" id="IPR013756">
    <property type="entry name" value="GlyE_cen_dom_subdom2"/>
</dbReference>
<dbReference type="InterPro" id="IPR014001">
    <property type="entry name" value="Helicase_ATP-bd"/>
</dbReference>
<dbReference type="InterPro" id="IPR001650">
    <property type="entry name" value="Helicase_C-like"/>
</dbReference>
<dbReference type="InterPro" id="IPR014756">
    <property type="entry name" value="Ig_E-set"/>
</dbReference>
<dbReference type="InterPro" id="IPR026490">
    <property type="entry name" value="mRNA_cap_0/1_MeTrfase"/>
</dbReference>
<dbReference type="InterPro" id="IPR049486">
    <property type="entry name" value="NS3-hel_C_flaviviridae"/>
</dbReference>
<dbReference type="InterPro" id="IPR027417">
    <property type="entry name" value="P-loop_NTPase"/>
</dbReference>
<dbReference type="InterPro" id="IPR009003">
    <property type="entry name" value="Peptidase_S1_PA"/>
</dbReference>
<dbReference type="InterPro" id="IPR007094">
    <property type="entry name" value="RNA-dir_pol_PSvirus"/>
</dbReference>
<dbReference type="InterPro" id="IPR002877">
    <property type="entry name" value="RNA_MeTrfase_FtsJ_dom"/>
</dbReference>
<dbReference type="InterPro" id="IPR029063">
    <property type="entry name" value="SAM-dependent_MTases_sf"/>
</dbReference>
<dbReference type="NCBIfam" id="TIGR04240">
    <property type="entry name" value="flavi_E_stem"/>
    <property type="match status" value="1"/>
</dbReference>
<dbReference type="Pfam" id="PF20907">
    <property type="entry name" value="Flav_NS3-hel_C"/>
    <property type="match status" value="1"/>
</dbReference>
<dbReference type="Pfam" id="PF01003">
    <property type="entry name" value="Flavi_capsid"/>
    <property type="match status" value="1"/>
</dbReference>
<dbReference type="Pfam" id="PF07652">
    <property type="entry name" value="Flavi_DEAD"/>
    <property type="match status" value="1"/>
</dbReference>
<dbReference type="Pfam" id="PF21659">
    <property type="entry name" value="Flavi_E_stem"/>
    <property type="match status" value="1"/>
</dbReference>
<dbReference type="Pfam" id="PF02832">
    <property type="entry name" value="Flavi_glycop_C"/>
    <property type="match status" value="1"/>
</dbReference>
<dbReference type="Pfam" id="PF00869">
    <property type="entry name" value="Flavi_glycoprot"/>
    <property type="match status" value="1"/>
</dbReference>
<dbReference type="Pfam" id="PF01004">
    <property type="entry name" value="Flavi_M"/>
    <property type="match status" value="1"/>
</dbReference>
<dbReference type="Pfam" id="PF00948">
    <property type="entry name" value="Flavi_NS1"/>
    <property type="match status" value="1"/>
</dbReference>
<dbReference type="Pfam" id="PF01005">
    <property type="entry name" value="Flavi_NS2A"/>
    <property type="match status" value="1"/>
</dbReference>
<dbReference type="Pfam" id="PF01350">
    <property type="entry name" value="Flavi_NS4A"/>
    <property type="match status" value="1"/>
</dbReference>
<dbReference type="Pfam" id="PF01349">
    <property type="entry name" value="Flavi_NS4B"/>
    <property type="match status" value="1"/>
</dbReference>
<dbReference type="Pfam" id="PF00972">
    <property type="entry name" value="Flavi_NS5"/>
    <property type="match status" value="1"/>
</dbReference>
<dbReference type="Pfam" id="PF20483">
    <property type="entry name" value="Flavi_NS5_thumb"/>
    <property type="match status" value="1"/>
</dbReference>
<dbReference type="Pfam" id="PF01570">
    <property type="entry name" value="Flavi_propep"/>
    <property type="match status" value="1"/>
</dbReference>
<dbReference type="Pfam" id="PF01728">
    <property type="entry name" value="FtsJ"/>
    <property type="match status" value="1"/>
</dbReference>
<dbReference type="Pfam" id="PF00949">
    <property type="entry name" value="Peptidase_S7"/>
    <property type="match status" value="1"/>
</dbReference>
<dbReference type="PIRSF" id="PIRSF003817">
    <property type="entry name" value="Gen_Poly_FLV"/>
    <property type="match status" value="1"/>
</dbReference>
<dbReference type="SMART" id="SM00487">
    <property type="entry name" value="DEXDc"/>
    <property type="match status" value="1"/>
</dbReference>
<dbReference type="SMART" id="SM00490">
    <property type="entry name" value="HELICc"/>
    <property type="match status" value="1"/>
</dbReference>
<dbReference type="SUPFAM" id="SSF56672">
    <property type="entry name" value="DNA/RNA polymerases"/>
    <property type="match status" value="1"/>
</dbReference>
<dbReference type="SUPFAM" id="SSF81296">
    <property type="entry name" value="E set domains"/>
    <property type="match status" value="1"/>
</dbReference>
<dbReference type="SUPFAM" id="SSF52540">
    <property type="entry name" value="P-loop containing nucleoside triphosphate hydrolases"/>
    <property type="match status" value="2"/>
</dbReference>
<dbReference type="SUPFAM" id="SSF53335">
    <property type="entry name" value="S-adenosyl-L-methionine-dependent methyltransferases"/>
    <property type="match status" value="1"/>
</dbReference>
<dbReference type="SUPFAM" id="SSF50494">
    <property type="entry name" value="Trypsin-like serine proteases"/>
    <property type="match status" value="1"/>
</dbReference>
<dbReference type="SUPFAM" id="SSF56983">
    <property type="entry name" value="Viral glycoprotein, central and dimerisation domains"/>
    <property type="match status" value="1"/>
</dbReference>
<dbReference type="PROSITE" id="PS51527">
    <property type="entry name" value="FLAVIVIRUS_NS2B"/>
    <property type="match status" value="1"/>
</dbReference>
<dbReference type="PROSITE" id="PS51528">
    <property type="entry name" value="FLAVIVIRUS_NS3PRO"/>
    <property type="match status" value="1"/>
</dbReference>
<dbReference type="PROSITE" id="PS51192">
    <property type="entry name" value="HELICASE_ATP_BIND_1"/>
    <property type="match status" value="1"/>
</dbReference>
<dbReference type="PROSITE" id="PS51194">
    <property type="entry name" value="HELICASE_CTER"/>
    <property type="match status" value="1"/>
</dbReference>
<dbReference type="PROSITE" id="PS50507">
    <property type="entry name" value="RDRP_SSRNA_POS"/>
    <property type="match status" value="1"/>
</dbReference>
<dbReference type="PROSITE" id="PS51591">
    <property type="entry name" value="RNA_CAP01_NS5_MT"/>
    <property type="match status" value="1"/>
</dbReference>
<proteinExistence type="evidence at protein level"/>